<keyword id="KW-0489">Methyltransferase</keyword>
<keyword id="KW-1185">Reference proteome</keyword>
<keyword id="KW-0949">S-adenosyl-L-methionine</keyword>
<keyword id="KW-0808">Transferase</keyword>
<reference key="1">
    <citation type="journal article" date="2002" name="DNA Res.">
        <title>Complete genomic sequence of nitrogen-fixing symbiotic bacterium Bradyrhizobium japonicum USDA110.</title>
        <authorList>
            <person name="Kaneko T."/>
            <person name="Nakamura Y."/>
            <person name="Sato S."/>
            <person name="Minamisawa K."/>
            <person name="Uchiumi T."/>
            <person name="Sasamoto S."/>
            <person name="Watanabe A."/>
            <person name="Idesawa K."/>
            <person name="Iriguchi M."/>
            <person name="Kawashima K."/>
            <person name="Kohara M."/>
            <person name="Matsumoto M."/>
            <person name="Shimpo S."/>
            <person name="Tsuruoka H."/>
            <person name="Wada T."/>
            <person name="Yamada M."/>
            <person name="Tabata S."/>
        </authorList>
    </citation>
    <scope>NUCLEOTIDE SEQUENCE [LARGE SCALE GENOMIC DNA]</scope>
    <source>
        <strain>JCM 10833 / BCRC 13528 / IAM 13628 / NBRC 14792 / USDA 110</strain>
    </source>
</reference>
<accession>Q89DG5</accession>
<name>PRMB_BRADU</name>
<comment type="function">
    <text evidence="1">Methylates large ribosomal subunit protein uL3 on a specific glutamine residue.</text>
</comment>
<comment type="catalytic activity">
    <reaction evidence="1">
        <text>L-glutaminyl-[ribosomal protein uL3] + S-adenosyl-L-methionine = N(5)-methyl-L-glutaminyl-[ribosomal protein uL3] + S-adenosyl-L-homocysteine + H(+)</text>
        <dbReference type="Rhea" id="RHEA:45020"/>
        <dbReference type="Rhea" id="RHEA-COMP:11063"/>
        <dbReference type="Rhea" id="RHEA-COMP:11064"/>
        <dbReference type="ChEBI" id="CHEBI:15378"/>
        <dbReference type="ChEBI" id="CHEBI:30011"/>
        <dbReference type="ChEBI" id="CHEBI:57856"/>
        <dbReference type="ChEBI" id="CHEBI:59789"/>
        <dbReference type="ChEBI" id="CHEBI:61891"/>
        <dbReference type="EC" id="2.1.1.298"/>
    </reaction>
</comment>
<comment type="similarity">
    <text evidence="1">Belongs to the protein N5-glutamine methyltransferase family. PrmB subfamily.</text>
</comment>
<proteinExistence type="inferred from homology"/>
<feature type="chain" id="PRO_0000414177" description="Ribosomal protein uL3 glutamine methyltransferase">
    <location>
        <begin position="1"/>
        <end position="319"/>
    </location>
</feature>
<evidence type="ECO:0000255" key="1">
    <source>
        <dbReference type="HAMAP-Rule" id="MF_02125"/>
    </source>
</evidence>
<sequence length="319" mass="34701">MARASKKTARGRAAPKLAKVGRGELVTLIDYVRYSVSRFNEAKLAFAHGTTDPVAEAAFLVCEALHLHPDQFEAFAHARVTAAEGKTLLDLIHQRVTTRKPAAYLVNKIYMRGLPFYVDERVIVPRSYIGELLDSHFGGDGEAGSLIDHPTAVERVLDLCTGSGCLAILAAYHFPNATVDAVDISKGALEVAARNVGEHGLDERVTLHRGDLFAPLGDNRYDLIITNPPYVDAEGMAALPPECRAEPKLAFDGGVDGLDVVRRILRDAPEHLTPDGGLICEIGRGRELVDEAFPELPLLWLDTEDSEGEVFWIAAADLD</sequence>
<dbReference type="EC" id="2.1.1.298" evidence="1"/>
<dbReference type="EMBL" id="BA000040">
    <property type="protein sequence ID" value="BAC52739.1"/>
    <property type="molecule type" value="Genomic_DNA"/>
</dbReference>
<dbReference type="RefSeq" id="NP_774114.1">
    <property type="nucleotide sequence ID" value="NC_004463.1"/>
</dbReference>
<dbReference type="RefSeq" id="WP_011090207.1">
    <property type="nucleotide sequence ID" value="NC_004463.1"/>
</dbReference>
<dbReference type="SMR" id="Q89DG5"/>
<dbReference type="FunCoup" id="Q89DG5">
    <property type="interactions" value="218"/>
</dbReference>
<dbReference type="STRING" id="224911.AAV28_35055"/>
<dbReference type="EnsemblBacteria" id="BAC52739">
    <property type="protein sequence ID" value="BAC52739"/>
    <property type="gene ID" value="BAC52739"/>
</dbReference>
<dbReference type="GeneID" id="46494431"/>
<dbReference type="KEGG" id="bja:blr7474"/>
<dbReference type="PATRIC" id="fig|224911.44.peg.7573"/>
<dbReference type="eggNOG" id="COG2890">
    <property type="taxonomic scope" value="Bacteria"/>
</dbReference>
<dbReference type="HOGENOM" id="CLU_018398_5_1_5"/>
<dbReference type="InParanoid" id="Q89DG5"/>
<dbReference type="OrthoDB" id="9800643at2"/>
<dbReference type="PhylomeDB" id="Q89DG5"/>
<dbReference type="Proteomes" id="UP000002526">
    <property type="component" value="Chromosome"/>
</dbReference>
<dbReference type="GO" id="GO:0005829">
    <property type="term" value="C:cytosol"/>
    <property type="evidence" value="ECO:0000318"/>
    <property type="project" value="GO_Central"/>
</dbReference>
<dbReference type="GO" id="GO:0003676">
    <property type="term" value="F:nucleic acid binding"/>
    <property type="evidence" value="ECO:0007669"/>
    <property type="project" value="InterPro"/>
</dbReference>
<dbReference type="GO" id="GO:0036009">
    <property type="term" value="F:protein-glutamine N-methyltransferase activity"/>
    <property type="evidence" value="ECO:0000318"/>
    <property type="project" value="GO_Central"/>
</dbReference>
<dbReference type="GO" id="GO:0032259">
    <property type="term" value="P:methylation"/>
    <property type="evidence" value="ECO:0007669"/>
    <property type="project" value="UniProtKB-KW"/>
</dbReference>
<dbReference type="CDD" id="cd02440">
    <property type="entry name" value="AdoMet_MTases"/>
    <property type="match status" value="1"/>
</dbReference>
<dbReference type="FunFam" id="3.40.50.150:FF:000042">
    <property type="entry name" value="50S ribosomal protein L3 glutamine methyltransferase"/>
    <property type="match status" value="1"/>
</dbReference>
<dbReference type="Gene3D" id="1.10.8.10">
    <property type="entry name" value="DNA helicase RuvA subunit, C-terminal domain"/>
    <property type="match status" value="1"/>
</dbReference>
<dbReference type="Gene3D" id="3.40.50.150">
    <property type="entry name" value="Vaccinia Virus protein VP39"/>
    <property type="match status" value="1"/>
</dbReference>
<dbReference type="HAMAP" id="MF_02125">
    <property type="entry name" value="L3_methyltr_PrmB"/>
    <property type="match status" value="1"/>
</dbReference>
<dbReference type="InterPro" id="IPR002052">
    <property type="entry name" value="DNA_methylase_N6_adenine_CS"/>
</dbReference>
<dbReference type="InterPro" id="IPR004556">
    <property type="entry name" value="HemK-like"/>
</dbReference>
<dbReference type="InterPro" id="IPR017127">
    <property type="entry name" value="Ribosome_uL3_MTase"/>
</dbReference>
<dbReference type="InterPro" id="IPR029063">
    <property type="entry name" value="SAM-dependent_MTases_sf"/>
</dbReference>
<dbReference type="InterPro" id="IPR007848">
    <property type="entry name" value="Small_mtfrase_dom"/>
</dbReference>
<dbReference type="NCBIfam" id="TIGR00536">
    <property type="entry name" value="hemK_fam"/>
    <property type="match status" value="1"/>
</dbReference>
<dbReference type="NCBIfam" id="TIGR03533">
    <property type="entry name" value="L3_gln_methyl"/>
    <property type="match status" value="1"/>
</dbReference>
<dbReference type="PANTHER" id="PTHR47806">
    <property type="entry name" value="50S RIBOSOMAL PROTEIN L3 GLUTAMINE METHYLTRANSFERASE"/>
    <property type="match status" value="1"/>
</dbReference>
<dbReference type="PANTHER" id="PTHR47806:SF1">
    <property type="entry name" value="RIBOSOMAL PROTEIN UL3 GLUTAMINE METHYLTRANSFERASE"/>
    <property type="match status" value="1"/>
</dbReference>
<dbReference type="Pfam" id="PF05175">
    <property type="entry name" value="MTS"/>
    <property type="match status" value="1"/>
</dbReference>
<dbReference type="PIRSF" id="PIRSF037167">
    <property type="entry name" value="Mtase_YfcB_prd"/>
    <property type="match status" value="1"/>
</dbReference>
<dbReference type="SUPFAM" id="SSF53335">
    <property type="entry name" value="S-adenosyl-L-methionine-dependent methyltransferases"/>
    <property type="match status" value="1"/>
</dbReference>
<organism>
    <name type="scientific">Bradyrhizobium diazoefficiens (strain JCM 10833 / BCRC 13528 / IAM 13628 / NBRC 14792 / USDA 110)</name>
    <dbReference type="NCBI Taxonomy" id="224911"/>
    <lineage>
        <taxon>Bacteria</taxon>
        <taxon>Pseudomonadati</taxon>
        <taxon>Pseudomonadota</taxon>
        <taxon>Alphaproteobacteria</taxon>
        <taxon>Hyphomicrobiales</taxon>
        <taxon>Nitrobacteraceae</taxon>
        <taxon>Bradyrhizobium</taxon>
    </lineage>
</organism>
<protein>
    <recommendedName>
        <fullName evidence="1">Ribosomal protein uL3 glutamine methyltransferase</fullName>
        <shortName evidence="1">uL3 MTase</shortName>
        <ecNumber evidence="1">2.1.1.298</ecNumber>
    </recommendedName>
    <alternativeName>
        <fullName evidence="1">N5-glutamine methyltransferase PrmB</fullName>
    </alternativeName>
</protein>
<gene>
    <name evidence="1" type="primary">prmB</name>
    <name type="ordered locus">blr7474</name>
</gene>